<gene>
    <name evidence="1" type="primary">rnhB</name>
    <name type="ordered locus">SA1087</name>
</gene>
<protein>
    <recommendedName>
        <fullName evidence="1">Ribonuclease HII</fullName>
        <shortName evidence="1">RNase HII</shortName>
        <ecNumber evidence="1">3.1.26.4</ecNumber>
    </recommendedName>
</protein>
<organism>
    <name type="scientific">Staphylococcus aureus (strain N315)</name>
    <dbReference type="NCBI Taxonomy" id="158879"/>
    <lineage>
        <taxon>Bacteria</taxon>
        <taxon>Bacillati</taxon>
        <taxon>Bacillota</taxon>
        <taxon>Bacilli</taxon>
        <taxon>Bacillales</taxon>
        <taxon>Staphylococcaceae</taxon>
        <taxon>Staphylococcus</taxon>
    </lineage>
</organism>
<evidence type="ECO:0000255" key="1">
    <source>
        <dbReference type="HAMAP-Rule" id="MF_00052"/>
    </source>
</evidence>
<evidence type="ECO:0000255" key="2">
    <source>
        <dbReference type="PROSITE-ProRule" id="PRU01319"/>
    </source>
</evidence>
<comment type="function">
    <text evidence="1">Endonuclease that specifically degrades the RNA of RNA-DNA hybrids.</text>
</comment>
<comment type="catalytic activity">
    <reaction evidence="1">
        <text>Endonucleolytic cleavage to 5'-phosphomonoester.</text>
        <dbReference type="EC" id="3.1.26.4"/>
    </reaction>
</comment>
<comment type="cofactor">
    <cofactor evidence="1">
        <name>Mn(2+)</name>
        <dbReference type="ChEBI" id="CHEBI:29035"/>
    </cofactor>
    <cofactor evidence="1">
        <name>Mg(2+)</name>
        <dbReference type="ChEBI" id="CHEBI:18420"/>
    </cofactor>
    <text evidence="1">Manganese or magnesium. Binds 1 divalent metal ion per monomer in the absence of substrate. May bind a second metal ion after substrate binding.</text>
</comment>
<comment type="subcellular location">
    <subcellularLocation>
        <location evidence="1">Cytoplasm</location>
    </subcellularLocation>
</comment>
<comment type="similarity">
    <text evidence="1">Belongs to the RNase HII family.</text>
</comment>
<sequence length="255" mass="28527">MTLTIKEVTQLINAVNTIEELENHECFLDERKGVQNAIARRRKALEKEQALKEKYVEMTYFENEILKEHPNAIICGIDEVGRGPLAGPVVACATILNSNHNYLGLDDSKKVPITKRLELNEALKNEVTAFAYGIATAEEIDEFNIYKATQIAMQRAIDGLSVQPTHLLIDAMTLDNALPQVSLIKGDARSVSIAAASIMAKVFRDDYMTQLSKDYPEYGFEKNAGYGTKQHLLAIDDIGIMKEHRKSFEPIKSLL</sequence>
<name>RNH2_STAAN</name>
<feature type="chain" id="PRO_0000111623" description="Ribonuclease HII">
    <location>
        <begin position="1"/>
        <end position="255"/>
    </location>
</feature>
<feature type="domain" description="RNase H type-2" evidence="2">
    <location>
        <begin position="72"/>
        <end position="255"/>
    </location>
</feature>
<feature type="binding site" evidence="1">
    <location>
        <position position="78"/>
    </location>
    <ligand>
        <name>a divalent metal cation</name>
        <dbReference type="ChEBI" id="CHEBI:60240"/>
    </ligand>
</feature>
<feature type="binding site" evidence="1">
    <location>
        <position position="79"/>
    </location>
    <ligand>
        <name>a divalent metal cation</name>
        <dbReference type="ChEBI" id="CHEBI:60240"/>
    </ligand>
</feature>
<feature type="binding site" evidence="1">
    <location>
        <position position="170"/>
    </location>
    <ligand>
        <name>a divalent metal cation</name>
        <dbReference type="ChEBI" id="CHEBI:60240"/>
    </ligand>
</feature>
<accession>P66676</accession>
<accession>Q99UM6</accession>
<keyword id="KW-0963">Cytoplasm</keyword>
<keyword id="KW-0255">Endonuclease</keyword>
<keyword id="KW-0378">Hydrolase</keyword>
<keyword id="KW-0464">Manganese</keyword>
<keyword id="KW-0479">Metal-binding</keyword>
<keyword id="KW-0540">Nuclease</keyword>
<dbReference type="EC" id="3.1.26.4" evidence="1"/>
<dbReference type="EMBL" id="BA000018">
    <property type="protein sequence ID" value="BAB42339.1"/>
    <property type="molecule type" value="Genomic_DNA"/>
</dbReference>
<dbReference type="PIR" id="G89897">
    <property type="entry name" value="G89897"/>
</dbReference>
<dbReference type="RefSeq" id="WP_000176393.1">
    <property type="nucleotide sequence ID" value="NC_002745.2"/>
</dbReference>
<dbReference type="SMR" id="P66676"/>
<dbReference type="EnsemblBacteria" id="BAB42339">
    <property type="protein sequence ID" value="BAB42339"/>
    <property type="gene ID" value="BAB42339"/>
</dbReference>
<dbReference type="KEGG" id="sau:SA1087"/>
<dbReference type="HOGENOM" id="CLU_036532_2_1_9"/>
<dbReference type="GO" id="GO:0005737">
    <property type="term" value="C:cytoplasm"/>
    <property type="evidence" value="ECO:0007669"/>
    <property type="project" value="UniProtKB-SubCell"/>
</dbReference>
<dbReference type="GO" id="GO:0032299">
    <property type="term" value="C:ribonuclease H2 complex"/>
    <property type="evidence" value="ECO:0007669"/>
    <property type="project" value="TreeGrafter"/>
</dbReference>
<dbReference type="GO" id="GO:0030145">
    <property type="term" value="F:manganese ion binding"/>
    <property type="evidence" value="ECO:0007669"/>
    <property type="project" value="UniProtKB-UniRule"/>
</dbReference>
<dbReference type="GO" id="GO:0003723">
    <property type="term" value="F:RNA binding"/>
    <property type="evidence" value="ECO:0007669"/>
    <property type="project" value="InterPro"/>
</dbReference>
<dbReference type="GO" id="GO:0004523">
    <property type="term" value="F:RNA-DNA hybrid ribonuclease activity"/>
    <property type="evidence" value="ECO:0007669"/>
    <property type="project" value="UniProtKB-UniRule"/>
</dbReference>
<dbReference type="GO" id="GO:0043137">
    <property type="term" value="P:DNA replication, removal of RNA primer"/>
    <property type="evidence" value="ECO:0007669"/>
    <property type="project" value="TreeGrafter"/>
</dbReference>
<dbReference type="GO" id="GO:0006298">
    <property type="term" value="P:mismatch repair"/>
    <property type="evidence" value="ECO:0007669"/>
    <property type="project" value="TreeGrafter"/>
</dbReference>
<dbReference type="CDD" id="cd07182">
    <property type="entry name" value="RNase_HII_bacteria_HII_like"/>
    <property type="match status" value="1"/>
</dbReference>
<dbReference type="FunFam" id="3.30.420.10:FF:000006">
    <property type="entry name" value="Ribonuclease HII"/>
    <property type="match status" value="1"/>
</dbReference>
<dbReference type="Gene3D" id="3.30.420.10">
    <property type="entry name" value="Ribonuclease H-like superfamily/Ribonuclease H"/>
    <property type="match status" value="1"/>
</dbReference>
<dbReference type="HAMAP" id="MF_00052_B">
    <property type="entry name" value="RNase_HII_B"/>
    <property type="match status" value="1"/>
</dbReference>
<dbReference type="InterPro" id="IPR022898">
    <property type="entry name" value="RNase_HII"/>
</dbReference>
<dbReference type="InterPro" id="IPR001352">
    <property type="entry name" value="RNase_HII/HIII"/>
</dbReference>
<dbReference type="InterPro" id="IPR024567">
    <property type="entry name" value="RNase_HII/HIII_dom"/>
</dbReference>
<dbReference type="InterPro" id="IPR012337">
    <property type="entry name" value="RNaseH-like_sf"/>
</dbReference>
<dbReference type="InterPro" id="IPR036397">
    <property type="entry name" value="RNaseH_sf"/>
</dbReference>
<dbReference type="NCBIfam" id="NF000594">
    <property type="entry name" value="PRK00015.1-1"/>
    <property type="match status" value="1"/>
</dbReference>
<dbReference type="NCBIfam" id="NF000595">
    <property type="entry name" value="PRK00015.1-3"/>
    <property type="match status" value="1"/>
</dbReference>
<dbReference type="PANTHER" id="PTHR10954">
    <property type="entry name" value="RIBONUCLEASE H2 SUBUNIT A"/>
    <property type="match status" value="1"/>
</dbReference>
<dbReference type="PANTHER" id="PTHR10954:SF18">
    <property type="entry name" value="RIBONUCLEASE HII"/>
    <property type="match status" value="1"/>
</dbReference>
<dbReference type="Pfam" id="PF01351">
    <property type="entry name" value="RNase_HII"/>
    <property type="match status" value="1"/>
</dbReference>
<dbReference type="SUPFAM" id="SSF53098">
    <property type="entry name" value="Ribonuclease H-like"/>
    <property type="match status" value="1"/>
</dbReference>
<dbReference type="PROSITE" id="PS51975">
    <property type="entry name" value="RNASE_H_2"/>
    <property type="match status" value="1"/>
</dbReference>
<proteinExistence type="inferred from homology"/>
<reference key="1">
    <citation type="journal article" date="2001" name="Lancet">
        <title>Whole genome sequencing of meticillin-resistant Staphylococcus aureus.</title>
        <authorList>
            <person name="Kuroda M."/>
            <person name="Ohta T."/>
            <person name="Uchiyama I."/>
            <person name="Baba T."/>
            <person name="Yuzawa H."/>
            <person name="Kobayashi I."/>
            <person name="Cui L."/>
            <person name="Oguchi A."/>
            <person name="Aoki K."/>
            <person name="Nagai Y."/>
            <person name="Lian J.-Q."/>
            <person name="Ito T."/>
            <person name="Kanamori M."/>
            <person name="Matsumaru H."/>
            <person name="Maruyama A."/>
            <person name="Murakami H."/>
            <person name="Hosoyama A."/>
            <person name="Mizutani-Ui Y."/>
            <person name="Takahashi N.K."/>
            <person name="Sawano T."/>
            <person name="Inoue R."/>
            <person name="Kaito C."/>
            <person name="Sekimizu K."/>
            <person name="Hirakawa H."/>
            <person name="Kuhara S."/>
            <person name="Goto S."/>
            <person name="Yabuzaki J."/>
            <person name="Kanehisa M."/>
            <person name="Yamashita A."/>
            <person name="Oshima K."/>
            <person name="Furuya K."/>
            <person name="Yoshino C."/>
            <person name="Shiba T."/>
            <person name="Hattori M."/>
            <person name="Ogasawara N."/>
            <person name="Hayashi H."/>
            <person name="Hiramatsu K."/>
        </authorList>
    </citation>
    <scope>NUCLEOTIDE SEQUENCE [LARGE SCALE GENOMIC DNA]</scope>
    <source>
        <strain>N315</strain>
    </source>
</reference>